<protein>
    <recommendedName>
        <fullName>Transcription factor YY2</fullName>
    </recommendedName>
    <alternativeName>
        <fullName>Yin and yang 2</fullName>
        <shortName>YY-2</shortName>
    </alternativeName>
</protein>
<keyword id="KW-0010">Activator</keyword>
<keyword id="KW-0238">DNA-binding</keyword>
<keyword id="KW-0479">Metal-binding</keyword>
<keyword id="KW-0539">Nucleus</keyword>
<keyword id="KW-1185">Reference proteome</keyword>
<keyword id="KW-0677">Repeat</keyword>
<keyword id="KW-0678">Repressor</keyword>
<keyword id="KW-0804">Transcription</keyword>
<keyword id="KW-0805">Transcription regulation</keyword>
<keyword id="KW-0862">Zinc</keyword>
<keyword id="KW-0863">Zinc-finger</keyword>
<organism>
    <name type="scientific">Mus musculus</name>
    <name type="common">Mouse</name>
    <dbReference type="NCBI Taxonomy" id="10090"/>
    <lineage>
        <taxon>Eukaryota</taxon>
        <taxon>Metazoa</taxon>
        <taxon>Chordata</taxon>
        <taxon>Craniata</taxon>
        <taxon>Vertebrata</taxon>
        <taxon>Euteleostomi</taxon>
        <taxon>Mammalia</taxon>
        <taxon>Eutheria</taxon>
        <taxon>Euarchontoglires</taxon>
        <taxon>Glires</taxon>
        <taxon>Rodentia</taxon>
        <taxon>Myomorpha</taxon>
        <taxon>Muroidea</taxon>
        <taxon>Muridae</taxon>
        <taxon>Murinae</taxon>
        <taxon>Mus</taxon>
        <taxon>Mus</taxon>
    </lineage>
</organism>
<gene>
    <name type="primary">Yy2</name>
</gene>
<feature type="chain" id="PRO_0000323761" description="Transcription factor YY2">
    <location>
        <begin position="1"/>
        <end position="378"/>
    </location>
</feature>
<feature type="zinc finger region" description="C2H2-type 1" evidence="2">
    <location>
        <begin position="260"/>
        <end position="284"/>
    </location>
</feature>
<feature type="zinc finger region" description="C2H2-type 2" evidence="2">
    <location>
        <begin position="289"/>
        <end position="311"/>
    </location>
</feature>
<feature type="zinc finger region" description="C2H2-type 3" evidence="2">
    <location>
        <begin position="317"/>
        <end position="341"/>
    </location>
</feature>
<feature type="zinc finger region" description="C2H2-type 4" evidence="2">
    <location>
        <begin position="347"/>
        <end position="371"/>
    </location>
</feature>
<feature type="region of interest" description="Mediates transcriptional activation" evidence="1">
    <location>
        <begin position="39"/>
        <end position="113"/>
    </location>
</feature>
<feature type="region of interest" description="Mediates transcriptional repression" evidence="1">
    <location>
        <begin position="243"/>
        <end position="378"/>
    </location>
</feature>
<feature type="sequence conflict" description="In Ref. 2; BAC29297." evidence="5" ref="2">
    <original>R</original>
    <variation>H</variation>
    <location>
        <position position="327"/>
    </location>
</feature>
<dbReference type="EMBL" id="EF688658">
    <property type="protein sequence ID" value="ABS18955.1"/>
    <property type="molecule type" value="Genomic_DNA"/>
</dbReference>
<dbReference type="EMBL" id="AK036071">
    <property type="protein sequence ID" value="BAC29297.1"/>
    <property type="molecule type" value="mRNA"/>
</dbReference>
<dbReference type="EMBL" id="AK161451">
    <property type="protein sequence ID" value="BAE36403.1"/>
    <property type="molecule type" value="mRNA"/>
</dbReference>
<dbReference type="CCDS" id="CCDS53233.1"/>
<dbReference type="RefSeq" id="NP_001092193.1">
    <property type="nucleotide sequence ID" value="NM_001098723.1"/>
</dbReference>
<dbReference type="SMR" id="Q3TTC2"/>
<dbReference type="BioGRID" id="791913">
    <property type="interactions" value="4"/>
</dbReference>
<dbReference type="FunCoup" id="Q3TTC2">
    <property type="interactions" value="67"/>
</dbReference>
<dbReference type="STRING" id="10090.ENSMUSP00000070112"/>
<dbReference type="iPTMnet" id="Q3TTC2"/>
<dbReference type="PhosphoSitePlus" id="Q3TTC2"/>
<dbReference type="jPOST" id="Q3TTC2"/>
<dbReference type="PaxDb" id="10090-ENSMUSP00000070112"/>
<dbReference type="PeptideAtlas" id="Q3TTC2"/>
<dbReference type="Antibodypedia" id="483">
    <property type="antibodies" value="144 antibodies from 29 providers"/>
</dbReference>
<dbReference type="Ensembl" id="ENSMUST00000065806.5">
    <property type="protein sequence ID" value="ENSMUSP00000070112.5"/>
    <property type="gene ID" value="ENSMUSG00000091736.4"/>
</dbReference>
<dbReference type="Ensembl" id="ENSMUST00000179062.8">
    <property type="protein sequence ID" value="ENSMUSP00000137233.2"/>
    <property type="gene ID" value="ENSMUSG00000046873.19"/>
</dbReference>
<dbReference type="GeneID" id="100073351"/>
<dbReference type="KEGG" id="mmu:100073351"/>
<dbReference type="UCSC" id="uc012hra.2">
    <property type="organism name" value="mouse"/>
</dbReference>
<dbReference type="AGR" id="MGI:3837947"/>
<dbReference type="CTD" id="404281"/>
<dbReference type="MGI" id="MGI:3837947">
    <property type="gene designation" value="Yy2"/>
</dbReference>
<dbReference type="VEuPathDB" id="HostDB:ENSMUSG00000046873"/>
<dbReference type="VEuPathDB" id="HostDB:ENSMUSG00000091736"/>
<dbReference type="eggNOG" id="KOG1721">
    <property type="taxonomic scope" value="Eukaryota"/>
</dbReference>
<dbReference type="GeneTree" id="ENSGT00510000048066"/>
<dbReference type="GeneTree" id="ENSGT00940000154763"/>
<dbReference type="HOGENOM" id="CLU_002678_42_2_1"/>
<dbReference type="InParanoid" id="Q3TTC2"/>
<dbReference type="OMA" id="HANDSFE"/>
<dbReference type="OrthoDB" id="10264072at2759"/>
<dbReference type="PhylomeDB" id="Q3TTC2"/>
<dbReference type="TreeFam" id="TF106493"/>
<dbReference type="BioGRID-ORCS" id="100073351">
    <property type="hits" value="3 hits in 45 CRISPR screens"/>
</dbReference>
<dbReference type="PRO" id="PR:Q3TTC2"/>
<dbReference type="Proteomes" id="UP000000589">
    <property type="component" value="Chromosome X"/>
</dbReference>
<dbReference type="RNAct" id="Q3TTC2">
    <property type="molecule type" value="protein"/>
</dbReference>
<dbReference type="Bgee" id="ENSMUSG00000046873">
    <property type="expression patterns" value="Expressed in superior cervical ganglion and 225 other cell types or tissues"/>
</dbReference>
<dbReference type="ExpressionAtlas" id="Q3TTC2">
    <property type="expression patterns" value="baseline and differential"/>
</dbReference>
<dbReference type="GO" id="GO:0005634">
    <property type="term" value="C:nucleus"/>
    <property type="evidence" value="ECO:0007669"/>
    <property type="project" value="UniProtKB-SubCell"/>
</dbReference>
<dbReference type="GO" id="GO:0000987">
    <property type="term" value="F:cis-regulatory region sequence-specific DNA binding"/>
    <property type="evidence" value="ECO:0000314"/>
    <property type="project" value="UniProtKB"/>
</dbReference>
<dbReference type="GO" id="GO:0008270">
    <property type="term" value="F:zinc ion binding"/>
    <property type="evidence" value="ECO:0007669"/>
    <property type="project" value="UniProtKB-KW"/>
</dbReference>
<dbReference type="FunFam" id="3.30.160.60:FF:000104">
    <property type="entry name" value="Transcriptional repressor protein YY1"/>
    <property type="match status" value="1"/>
</dbReference>
<dbReference type="FunFam" id="3.30.160.60:FF:000109">
    <property type="entry name" value="Transcriptional repressor protein YY1"/>
    <property type="match status" value="1"/>
</dbReference>
<dbReference type="FunFam" id="3.30.160.60:FF:000174">
    <property type="entry name" value="Transcriptional repressor protein YY1"/>
    <property type="match status" value="1"/>
</dbReference>
<dbReference type="FunFam" id="3.30.160.60:FF:000163">
    <property type="entry name" value="transcriptional repressor protein YY1"/>
    <property type="match status" value="1"/>
</dbReference>
<dbReference type="Gene3D" id="3.30.160.60">
    <property type="entry name" value="Classic Zinc Finger"/>
    <property type="match status" value="4"/>
</dbReference>
<dbReference type="InterPro" id="IPR017114">
    <property type="entry name" value="YY1-like"/>
</dbReference>
<dbReference type="InterPro" id="IPR036236">
    <property type="entry name" value="Znf_C2H2_sf"/>
</dbReference>
<dbReference type="InterPro" id="IPR013087">
    <property type="entry name" value="Znf_C2H2_type"/>
</dbReference>
<dbReference type="PANTHER" id="PTHR14003:SF11">
    <property type="entry name" value="TRANSCRIPTION FACTOR YY2"/>
    <property type="match status" value="1"/>
</dbReference>
<dbReference type="PANTHER" id="PTHR14003">
    <property type="entry name" value="TRANSCRIPTIONAL REPRESSOR PROTEIN YY"/>
    <property type="match status" value="1"/>
</dbReference>
<dbReference type="Pfam" id="PF00096">
    <property type="entry name" value="zf-C2H2"/>
    <property type="match status" value="3"/>
</dbReference>
<dbReference type="PIRSF" id="PIRSF037113">
    <property type="entry name" value="TF_Yin_yang"/>
    <property type="match status" value="1"/>
</dbReference>
<dbReference type="SMART" id="SM00355">
    <property type="entry name" value="ZnF_C2H2"/>
    <property type="match status" value="4"/>
</dbReference>
<dbReference type="SUPFAM" id="SSF57667">
    <property type="entry name" value="beta-beta-alpha zinc fingers"/>
    <property type="match status" value="3"/>
</dbReference>
<dbReference type="PROSITE" id="PS00028">
    <property type="entry name" value="ZINC_FINGER_C2H2_1"/>
    <property type="match status" value="4"/>
</dbReference>
<dbReference type="PROSITE" id="PS50157">
    <property type="entry name" value="ZINC_FINGER_C2H2_2"/>
    <property type="match status" value="4"/>
</dbReference>
<evidence type="ECO:0000250" key="1"/>
<evidence type="ECO:0000255" key="2">
    <source>
        <dbReference type="PROSITE-ProRule" id="PRU00042"/>
    </source>
</evidence>
<evidence type="ECO:0000269" key="3">
    <source>
    </source>
</evidence>
<evidence type="ECO:0000269" key="4">
    <source>
    </source>
</evidence>
<evidence type="ECO:0000305" key="5"/>
<reference key="1">
    <citation type="submission" date="2007-06" db="EMBL/GenBank/DDBJ databases">
        <authorList>
            <person name="Klar M."/>
            <person name="Dame C."/>
            <person name="Bode J."/>
        </authorList>
    </citation>
    <scope>NUCLEOTIDE SEQUENCE [GENOMIC DNA]</scope>
</reference>
<reference key="2">
    <citation type="journal article" date="2005" name="Science">
        <title>The transcriptional landscape of the mammalian genome.</title>
        <authorList>
            <person name="Carninci P."/>
            <person name="Kasukawa T."/>
            <person name="Katayama S."/>
            <person name="Gough J."/>
            <person name="Frith M.C."/>
            <person name="Maeda N."/>
            <person name="Oyama R."/>
            <person name="Ravasi T."/>
            <person name="Lenhard B."/>
            <person name="Wells C."/>
            <person name="Kodzius R."/>
            <person name="Shimokawa K."/>
            <person name="Bajic V.B."/>
            <person name="Brenner S.E."/>
            <person name="Batalov S."/>
            <person name="Forrest A.R."/>
            <person name="Zavolan M."/>
            <person name="Davis M.J."/>
            <person name="Wilming L.G."/>
            <person name="Aidinis V."/>
            <person name="Allen J.E."/>
            <person name="Ambesi-Impiombato A."/>
            <person name="Apweiler R."/>
            <person name="Aturaliya R.N."/>
            <person name="Bailey T.L."/>
            <person name="Bansal M."/>
            <person name="Baxter L."/>
            <person name="Beisel K.W."/>
            <person name="Bersano T."/>
            <person name="Bono H."/>
            <person name="Chalk A.M."/>
            <person name="Chiu K.P."/>
            <person name="Choudhary V."/>
            <person name="Christoffels A."/>
            <person name="Clutterbuck D.R."/>
            <person name="Crowe M.L."/>
            <person name="Dalla E."/>
            <person name="Dalrymple B.P."/>
            <person name="de Bono B."/>
            <person name="Della Gatta G."/>
            <person name="di Bernardo D."/>
            <person name="Down T."/>
            <person name="Engstrom P."/>
            <person name="Fagiolini M."/>
            <person name="Faulkner G."/>
            <person name="Fletcher C.F."/>
            <person name="Fukushima T."/>
            <person name="Furuno M."/>
            <person name="Futaki S."/>
            <person name="Gariboldi M."/>
            <person name="Georgii-Hemming P."/>
            <person name="Gingeras T.R."/>
            <person name="Gojobori T."/>
            <person name="Green R.E."/>
            <person name="Gustincich S."/>
            <person name="Harbers M."/>
            <person name="Hayashi Y."/>
            <person name="Hensch T.K."/>
            <person name="Hirokawa N."/>
            <person name="Hill D."/>
            <person name="Huminiecki L."/>
            <person name="Iacono M."/>
            <person name="Ikeo K."/>
            <person name="Iwama A."/>
            <person name="Ishikawa T."/>
            <person name="Jakt M."/>
            <person name="Kanapin A."/>
            <person name="Katoh M."/>
            <person name="Kawasawa Y."/>
            <person name="Kelso J."/>
            <person name="Kitamura H."/>
            <person name="Kitano H."/>
            <person name="Kollias G."/>
            <person name="Krishnan S.P."/>
            <person name="Kruger A."/>
            <person name="Kummerfeld S.K."/>
            <person name="Kurochkin I.V."/>
            <person name="Lareau L.F."/>
            <person name="Lazarevic D."/>
            <person name="Lipovich L."/>
            <person name="Liu J."/>
            <person name="Liuni S."/>
            <person name="McWilliam S."/>
            <person name="Madan Babu M."/>
            <person name="Madera M."/>
            <person name="Marchionni L."/>
            <person name="Matsuda H."/>
            <person name="Matsuzawa S."/>
            <person name="Miki H."/>
            <person name="Mignone F."/>
            <person name="Miyake S."/>
            <person name="Morris K."/>
            <person name="Mottagui-Tabar S."/>
            <person name="Mulder N."/>
            <person name="Nakano N."/>
            <person name="Nakauchi H."/>
            <person name="Ng P."/>
            <person name="Nilsson R."/>
            <person name="Nishiguchi S."/>
            <person name="Nishikawa S."/>
            <person name="Nori F."/>
            <person name="Ohara O."/>
            <person name="Okazaki Y."/>
            <person name="Orlando V."/>
            <person name="Pang K.C."/>
            <person name="Pavan W.J."/>
            <person name="Pavesi G."/>
            <person name="Pesole G."/>
            <person name="Petrovsky N."/>
            <person name="Piazza S."/>
            <person name="Reed J."/>
            <person name="Reid J.F."/>
            <person name="Ring B.Z."/>
            <person name="Ringwald M."/>
            <person name="Rost B."/>
            <person name="Ruan Y."/>
            <person name="Salzberg S.L."/>
            <person name="Sandelin A."/>
            <person name="Schneider C."/>
            <person name="Schoenbach C."/>
            <person name="Sekiguchi K."/>
            <person name="Semple C.A."/>
            <person name="Seno S."/>
            <person name="Sessa L."/>
            <person name="Sheng Y."/>
            <person name="Shibata Y."/>
            <person name="Shimada H."/>
            <person name="Shimada K."/>
            <person name="Silva D."/>
            <person name="Sinclair B."/>
            <person name="Sperling S."/>
            <person name="Stupka E."/>
            <person name="Sugiura K."/>
            <person name="Sultana R."/>
            <person name="Takenaka Y."/>
            <person name="Taki K."/>
            <person name="Tammoja K."/>
            <person name="Tan S.L."/>
            <person name="Tang S."/>
            <person name="Taylor M.S."/>
            <person name="Tegner J."/>
            <person name="Teichmann S.A."/>
            <person name="Ueda H.R."/>
            <person name="van Nimwegen E."/>
            <person name="Verardo R."/>
            <person name="Wei C.L."/>
            <person name="Yagi K."/>
            <person name="Yamanishi H."/>
            <person name="Zabarovsky E."/>
            <person name="Zhu S."/>
            <person name="Zimmer A."/>
            <person name="Hide W."/>
            <person name="Bult C."/>
            <person name="Grimmond S.M."/>
            <person name="Teasdale R.D."/>
            <person name="Liu E.T."/>
            <person name="Brusic V."/>
            <person name="Quackenbush J."/>
            <person name="Wahlestedt C."/>
            <person name="Mattick J.S."/>
            <person name="Hume D.A."/>
            <person name="Kai C."/>
            <person name="Sasaki D."/>
            <person name="Tomaru Y."/>
            <person name="Fukuda S."/>
            <person name="Kanamori-Katayama M."/>
            <person name="Suzuki M."/>
            <person name="Aoki J."/>
            <person name="Arakawa T."/>
            <person name="Iida J."/>
            <person name="Imamura K."/>
            <person name="Itoh M."/>
            <person name="Kato T."/>
            <person name="Kawaji H."/>
            <person name="Kawagashira N."/>
            <person name="Kawashima T."/>
            <person name="Kojima M."/>
            <person name="Kondo S."/>
            <person name="Konno H."/>
            <person name="Nakano K."/>
            <person name="Ninomiya N."/>
            <person name="Nishio T."/>
            <person name="Okada M."/>
            <person name="Plessy C."/>
            <person name="Shibata K."/>
            <person name="Shiraki T."/>
            <person name="Suzuki S."/>
            <person name="Tagami M."/>
            <person name="Waki K."/>
            <person name="Watahiki A."/>
            <person name="Okamura-Oho Y."/>
            <person name="Suzuki H."/>
            <person name="Kawai J."/>
            <person name="Hayashizaki Y."/>
        </authorList>
    </citation>
    <scope>NUCLEOTIDE SEQUENCE [LARGE SCALE MRNA]</scope>
    <source>
        <strain>C57BL/6J</strain>
        <tissue>Cerebellum</tissue>
        <tissue>Testis</tissue>
    </source>
</reference>
<reference key="3">
    <citation type="journal article" date="2006" name="Genomics">
        <title>Rapid evolution of a recently retroposed transcription factor YY2 in mammalian genomes.</title>
        <authorList>
            <person name="Luo C."/>
            <person name="Lu X."/>
            <person name="Stubbs L."/>
            <person name="Kim J."/>
        </authorList>
    </citation>
    <scope>IDENTIFICATION</scope>
    <scope>TISSUE SPECIFICITY</scope>
</reference>
<reference key="4">
    <citation type="journal article" date="2007" name="Nucleic Acids Res.">
        <title>Retroposition and evolution of the DNA-binding motifs of YY1, YY2 and REX1.</title>
        <authorList>
            <person name="Kim J.D."/>
            <person name="Faulk C."/>
            <person name="Kim J."/>
        </authorList>
    </citation>
    <scope>IDENTIFICATION</scope>
    <scope>FUNCTION</scope>
</reference>
<name>TYY2_MOUSE</name>
<sequence length="378" mass="42031">MASETEKLLCLNTESAEIPADFVELLPPDNIGDIEAVSLETSVGQTIEVYGDVGVDWAHGSQYHSPVIALQPLVGSSLSSRDHDKEMFVVQTREEEVVGYQDSDNLLFSPEFGSQMVLPVNEDDYLQPTTASFTGFLAAENGQGELSPYEGNLCGLTTFIEAGAEESVNADLGDKQWEQKQIDGLDGEFPFTMWDDVNEKEDPIAEEQAGESPPDYSEYMTGKKFPPEGIPGIDLSDPKQLAEFTSMRPKKPKGDFPRPIACSHKGCEKMFKDNSAMRKHLHIHGPRVHVCAECGKAFVESSKLKRHQLVHTGEKPYQCTFEGCGRRFSLDFNLRTHVRIHTGDKPFVCPFDACNKKFAQSTNLKSHILTHVKNKNDQ</sequence>
<accession>Q3TTC2</accession>
<accession>Q8CBG3</accession>
<comment type="function">
    <text evidence="4">Functions as a multifunctional transcription factor that may exhibit positive and negative control on a large number of genes. May antagonize YY1 and function in development and differentiation.</text>
</comment>
<comment type="subcellular location">
    <subcellularLocation>
        <location evidence="5">Nucleus</location>
    </subcellularLocation>
</comment>
<comment type="tissue specificity">
    <text evidence="3">Weakly expressed by neuronal and glial cells in the cerebral cortex. Expressed by Purkinje cells and in the granular layers of the cerebellum. Expressed in all layers of spermatocytes in testis but not detected in sperm cells.</text>
</comment>
<comment type="miscellaneous">
    <text>The gene encoding this protein appears to have arisen by retrotransposition of the YY1 gene in placental mammals. It is encoded by a single exon found in an intron of the gene Mbtps2.</text>
</comment>
<comment type="similarity">
    <text evidence="5">Belongs to the YY transcription factor family.</text>
</comment>
<proteinExistence type="evidence at transcript level"/>